<reference key="1">
    <citation type="journal article" date="1994" name="Proc. Natl. Acad. Sci. U.S.A.">
        <title>Two highly homologous members of the ClC chloride channel family in both rat and human kidney.</title>
        <authorList>
            <person name="Kieferle S."/>
            <person name="Fong P."/>
            <person name="Bens M."/>
            <person name="Vandewalle A."/>
            <person name="Jentsch T."/>
        </authorList>
    </citation>
    <scope>NUCLEOTIDE SEQUENCE [MRNA] (ISOFORM 1)</scope>
    <scope>VARIANTS LEU-27; GLY-214; VAL-287; THR-562 AND GLU-578</scope>
    <source>
        <tissue>Kidney</tissue>
    </source>
</reference>
<reference key="2">
    <citation type="journal article" date="1995" name="Kidney Int.">
        <title>Cloning, tissue distribution, and intrarenal localization of ClC chloride channels in human kidney.</title>
        <authorList>
            <person name="Takeuchi Y."/>
            <person name="Uchida S."/>
            <person name="Marumo F."/>
            <person name="Sasaki S."/>
        </authorList>
    </citation>
    <scope>NUCLEOTIDE SEQUENCE [MRNA] (ISOFORM 1)</scope>
    <scope>VARIANTS LEU-27; GLY-214; VAL-287; THR-562 AND GLU-578</scope>
    <source>
        <tissue>Kidney</tissue>
    </source>
</reference>
<reference key="3">
    <citation type="journal article" date="2004" name="Nat. Genet.">
        <title>Complete sequencing and characterization of 21,243 full-length human cDNAs.</title>
        <authorList>
            <person name="Ota T."/>
            <person name="Suzuki Y."/>
            <person name="Nishikawa T."/>
            <person name="Otsuki T."/>
            <person name="Sugiyama T."/>
            <person name="Irie R."/>
            <person name="Wakamatsu A."/>
            <person name="Hayashi K."/>
            <person name="Sato H."/>
            <person name="Nagai K."/>
            <person name="Kimura K."/>
            <person name="Makita H."/>
            <person name="Sekine M."/>
            <person name="Obayashi M."/>
            <person name="Nishi T."/>
            <person name="Shibahara T."/>
            <person name="Tanaka T."/>
            <person name="Ishii S."/>
            <person name="Yamamoto J."/>
            <person name="Saito K."/>
            <person name="Kawai Y."/>
            <person name="Isono Y."/>
            <person name="Nakamura Y."/>
            <person name="Nagahari K."/>
            <person name="Murakami K."/>
            <person name="Yasuda T."/>
            <person name="Iwayanagi T."/>
            <person name="Wagatsuma M."/>
            <person name="Shiratori A."/>
            <person name="Sudo H."/>
            <person name="Hosoiri T."/>
            <person name="Kaku Y."/>
            <person name="Kodaira H."/>
            <person name="Kondo H."/>
            <person name="Sugawara M."/>
            <person name="Takahashi M."/>
            <person name="Kanda K."/>
            <person name="Yokoi T."/>
            <person name="Furuya T."/>
            <person name="Kikkawa E."/>
            <person name="Omura Y."/>
            <person name="Abe K."/>
            <person name="Kamihara K."/>
            <person name="Katsuta N."/>
            <person name="Sato K."/>
            <person name="Tanikawa M."/>
            <person name="Yamazaki M."/>
            <person name="Ninomiya K."/>
            <person name="Ishibashi T."/>
            <person name="Yamashita H."/>
            <person name="Murakawa K."/>
            <person name="Fujimori K."/>
            <person name="Tanai H."/>
            <person name="Kimata M."/>
            <person name="Watanabe M."/>
            <person name="Hiraoka S."/>
            <person name="Chiba Y."/>
            <person name="Ishida S."/>
            <person name="Ono Y."/>
            <person name="Takiguchi S."/>
            <person name="Watanabe S."/>
            <person name="Yosida M."/>
            <person name="Hotuta T."/>
            <person name="Kusano J."/>
            <person name="Kanehori K."/>
            <person name="Takahashi-Fujii A."/>
            <person name="Hara H."/>
            <person name="Tanase T.-O."/>
            <person name="Nomura Y."/>
            <person name="Togiya S."/>
            <person name="Komai F."/>
            <person name="Hara R."/>
            <person name="Takeuchi K."/>
            <person name="Arita M."/>
            <person name="Imose N."/>
            <person name="Musashino K."/>
            <person name="Yuuki H."/>
            <person name="Oshima A."/>
            <person name="Sasaki N."/>
            <person name="Aotsuka S."/>
            <person name="Yoshikawa Y."/>
            <person name="Matsunawa H."/>
            <person name="Ichihara T."/>
            <person name="Shiohata N."/>
            <person name="Sano S."/>
            <person name="Moriya S."/>
            <person name="Momiyama H."/>
            <person name="Satoh N."/>
            <person name="Takami S."/>
            <person name="Terashima Y."/>
            <person name="Suzuki O."/>
            <person name="Nakagawa S."/>
            <person name="Senoh A."/>
            <person name="Mizoguchi H."/>
            <person name="Goto Y."/>
            <person name="Shimizu F."/>
            <person name="Wakebe H."/>
            <person name="Hishigaki H."/>
            <person name="Watanabe T."/>
            <person name="Sugiyama A."/>
            <person name="Takemoto M."/>
            <person name="Kawakami B."/>
            <person name="Yamazaki M."/>
            <person name="Watanabe K."/>
            <person name="Kumagai A."/>
            <person name="Itakura S."/>
            <person name="Fukuzumi Y."/>
            <person name="Fujimori Y."/>
            <person name="Komiyama M."/>
            <person name="Tashiro H."/>
            <person name="Tanigami A."/>
            <person name="Fujiwara T."/>
            <person name="Ono T."/>
            <person name="Yamada K."/>
            <person name="Fujii Y."/>
            <person name="Ozaki K."/>
            <person name="Hirao M."/>
            <person name="Ohmori Y."/>
            <person name="Kawabata A."/>
            <person name="Hikiji T."/>
            <person name="Kobatake N."/>
            <person name="Inagaki H."/>
            <person name="Ikema Y."/>
            <person name="Okamoto S."/>
            <person name="Okitani R."/>
            <person name="Kawakami T."/>
            <person name="Noguchi S."/>
            <person name="Itoh T."/>
            <person name="Shigeta K."/>
            <person name="Senba T."/>
            <person name="Matsumura K."/>
            <person name="Nakajima Y."/>
            <person name="Mizuno T."/>
            <person name="Morinaga M."/>
            <person name="Sasaki M."/>
            <person name="Togashi T."/>
            <person name="Oyama M."/>
            <person name="Hata H."/>
            <person name="Watanabe M."/>
            <person name="Komatsu T."/>
            <person name="Mizushima-Sugano J."/>
            <person name="Satoh T."/>
            <person name="Shirai Y."/>
            <person name="Takahashi Y."/>
            <person name="Nakagawa K."/>
            <person name="Okumura K."/>
            <person name="Nagase T."/>
            <person name="Nomura N."/>
            <person name="Kikuchi H."/>
            <person name="Masuho Y."/>
            <person name="Yamashita R."/>
            <person name="Nakai K."/>
            <person name="Yada T."/>
            <person name="Nakamura Y."/>
            <person name="Ohara O."/>
            <person name="Isogai T."/>
            <person name="Sugano S."/>
        </authorList>
    </citation>
    <scope>NUCLEOTIDE SEQUENCE [LARGE SCALE MRNA] (ISOFORM 2)</scope>
    <scope>VARIANT VAL-287</scope>
    <source>
        <tissue>Uterus</tissue>
    </source>
</reference>
<reference key="4">
    <citation type="journal article" date="2006" name="Nature">
        <title>The DNA sequence and biological annotation of human chromosome 1.</title>
        <authorList>
            <person name="Gregory S.G."/>
            <person name="Barlow K.F."/>
            <person name="McLay K.E."/>
            <person name="Kaul R."/>
            <person name="Swarbreck D."/>
            <person name="Dunham A."/>
            <person name="Scott C.E."/>
            <person name="Howe K.L."/>
            <person name="Woodfine K."/>
            <person name="Spencer C.C.A."/>
            <person name="Jones M.C."/>
            <person name="Gillson C."/>
            <person name="Searle S."/>
            <person name="Zhou Y."/>
            <person name="Kokocinski F."/>
            <person name="McDonald L."/>
            <person name="Evans R."/>
            <person name="Phillips K."/>
            <person name="Atkinson A."/>
            <person name="Cooper R."/>
            <person name="Jones C."/>
            <person name="Hall R.E."/>
            <person name="Andrews T.D."/>
            <person name="Lloyd C."/>
            <person name="Ainscough R."/>
            <person name="Almeida J.P."/>
            <person name="Ambrose K.D."/>
            <person name="Anderson F."/>
            <person name="Andrew R.W."/>
            <person name="Ashwell R.I.S."/>
            <person name="Aubin K."/>
            <person name="Babbage A.K."/>
            <person name="Bagguley C.L."/>
            <person name="Bailey J."/>
            <person name="Beasley H."/>
            <person name="Bethel G."/>
            <person name="Bird C.P."/>
            <person name="Bray-Allen S."/>
            <person name="Brown J.Y."/>
            <person name="Brown A.J."/>
            <person name="Buckley D."/>
            <person name="Burton J."/>
            <person name="Bye J."/>
            <person name="Carder C."/>
            <person name="Chapman J.C."/>
            <person name="Clark S.Y."/>
            <person name="Clarke G."/>
            <person name="Clee C."/>
            <person name="Cobley V."/>
            <person name="Collier R.E."/>
            <person name="Corby N."/>
            <person name="Coville G.J."/>
            <person name="Davies J."/>
            <person name="Deadman R."/>
            <person name="Dunn M."/>
            <person name="Earthrowl M."/>
            <person name="Ellington A.G."/>
            <person name="Errington H."/>
            <person name="Frankish A."/>
            <person name="Frankland J."/>
            <person name="French L."/>
            <person name="Garner P."/>
            <person name="Garnett J."/>
            <person name="Gay L."/>
            <person name="Ghori M.R.J."/>
            <person name="Gibson R."/>
            <person name="Gilby L.M."/>
            <person name="Gillett W."/>
            <person name="Glithero R.J."/>
            <person name="Grafham D.V."/>
            <person name="Griffiths C."/>
            <person name="Griffiths-Jones S."/>
            <person name="Grocock R."/>
            <person name="Hammond S."/>
            <person name="Harrison E.S.I."/>
            <person name="Hart E."/>
            <person name="Haugen E."/>
            <person name="Heath P.D."/>
            <person name="Holmes S."/>
            <person name="Holt K."/>
            <person name="Howden P.J."/>
            <person name="Hunt A.R."/>
            <person name="Hunt S.E."/>
            <person name="Hunter G."/>
            <person name="Isherwood J."/>
            <person name="James R."/>
            <person name="Johnson C."/>
            <person name="Johnson D."/>
            <person name="Joy A."/>
            <person name="Kay M."/>
            <person name="Kershaw J.K."/>
            <person name="Kibukawa M."/>
            <person name="Kimberley A.M."/>
            <person name="King A."/>
            <person name="Knights A.J."/>
            <person name="Lad H."/>
            <person name="Laird G."/>
            <person name="Lawlor S."/>
            <person name="Leongamornlert D.A."/>
            <person name="Lloyd D.M."/>
            <person name="Loveland J."/>
            <person name="Lovell J."/>
            <person name="Lush M.J."/>
            <person name="Lyne R."/>
            <person name="Martin S."/>
            <person name="Mashreghi-Mohammadi M."/>
            <person name="Matthews L."/>
            <person name="Matthews N.S.W."/>
            <person name="McLaren S."/>
            <person name="Milne S."/>
            <person name="Mistry S."/>
            <person name="Moore M.J.F."/>
            <person name="Nickerson T."/>
            <person name="O'Dell C.N."/>
            <person name="Oliver K."/>
            <person name="Palmeiri A."/>
            <person name="Palmer S.A."/>
            <person name="Parker A."/>
            <person name="Patel D."/>
            <person name="Pearce A.V."/>
            <person name="Peck A.I."/>
            <person name="Pelan S."/>
            <person name="Phelps K."/>
            <person name="Phillimore B.J."/>
            <person name="Plumb R."/>
            <person name="Rajan J."/>
            <person name="Raymond C."/>
            <person name="Rouse G."/>
            <person name="Saenphimmachak C."/>
            <person name="Sehra H.K."/>
            <person name="Sheridan E."/>
            <person name="Shownkeen R."/>
            <person name="Sims S."/>
            <person name="Skuce C.D."/>
            <person name="Smith M."/>
            <person name="Steward C."/>
            <person name="Subramanian S."/>
            <person name="Sycamore N."/>
            <person name="Tracey A."/>
            <person name="Tromans A."/>
            <person name="Van Helmond Z."/>
            <person name="Wall M."/>
            <person name="Wallis J.M."/>
            <person name="White S."/>
            <person name="Whitehead S.L."/>
            <person name="Wilkinson J.E."/>
            <person name="Willey D.L."/>
            <person name="Williams H."/>
            <person name="Wilming L."/>
            <person name="Wray P.W."/>
            <person name="Wu Z."/>
            <person name="Coulson A."/>
            <person name="Vaudin M."/>
            <person name="Sulston J.E."/>
            <person name="Durbin R.M."/>
            <person name="Hubbard T."/>
            <person name="Wooster R."/>
            <person name="Dunham I."/>
            <person name="Carter N.P."/>
            <person name="McVean G."/>
            <person name="Ross M.T."/>
            <person name="Harrow J."/>
            <person name="Olson M.V."/>
            <person name="Beck S."/>
            <person name="Rogers J."/>
            <person name="Bentley D.R."/>
        </authorList>
    </citation>
    <scope>NUCLEOTIDE SEQUENCE [LARGE SCALE GENOMIC DNA]</scope>
</reference>
<reference key="5">
    <citation type="submission" date="1997-03" db="EMBL/GenBank/DDBJ databases">
        <title>Refined chromosomal localization of six human CLCN chloride ion channel genes.</title>
        <authorList>
            <person name="Schutte B.C."/>
            <person name="Malik M.I."/>
            <person name="Fingert J."/>
            <person name="Barna T.J."/>
            <person name="Stone E."/>
            <person name="Lamb F.S."/>
        </authorList>
    </citation>
    <scope>NUCLEOTIDE SEQUENCE [GENOMIC DNA] OF 153-203</scope>
</reference>
<reference key="6">
    <citation type="journal article" date="2001" name="Nature">
        <title>Barttin is a Cl- channel beta-subunit crucial for renal Cl-reabsorption and inner ear K+ secretion.</title>
        <authorList>
            <person name="Estevez R."/>
            <person name="Boettger T."/>
            <person name="Stein V."/>
            <person name="Birkenhaeger R."/>
            <person name="Otto E."/>
            <person name="Hildebrandt F."/>
            <person name="Jentsch T.J."/>
        </authorList>
    </citation>
    <scope>FUNCTION</scope>
    <scope>TRANSPORTER ACTIVITY</scope>
    <scope>ACTIVITY REGULATION</scope>
    <scope>CHARACTERIZATION OF VARIANTS BARTS3 LEU-124; THR-204; ASP-349; CYS-438; PRO-538 AND MET-560</scope>
</reference>
<reference key="7">
    <citation type="journal article" date="2002" name="Pflugers Arch.">
        <title>Barttin increases surface expression and changes current properties of ClC-K channels.</title>
        <authorList>
            <person name="Waldegger S."/>
            <person name="Jeck N."/>
            <person name="Barth P."/>
            <person name="Peters M."/>
            <person name="Vitzthum H."/>
            <person name="Wolf K."/>
            <person name="Kurtz A."/>
            <person name="Konrad M."/>
            <person name="Seyberth H.W."/>
        </authorList>
    </citation>
    <scope>FUNCTION</scope>
    <scope>TRANSPORTER ACTIVITY</scope>
    <scope>INTERACTION WITH BSND</scope>
</reference>
<reference key="8">
    <citation type="journal article" date="2006" name="Proc. Natl. Acad. Sci. U.S.A.">
        <title>Barttin modulates trafficking and function of ClC-K channels.</title>
        <authorList>
            <person name="Scholl U."/>
            <person name="Hebeisen S."/>
            <person name="Janssen A.G."/>
            <person name="Mueller-Newen G."/>
            <person name="Alekov A."/>
            <person name="Fahlke C."/>
        </authorList>
    </citation>
    <scope>FUNCTION</scope>
</reference>
<reference key="9">
    <citation type="journal article" date="2009" name="Am. J. Hum. Genet.">
        <title>Molecular basis of DFNB73: mutations of BSND can cause nonsyndromic deafness or Bartter syndrome.</title>
        <authorList>
            <person name="Riazuddin S."/>
            <person name="Anwar S."/>
            <person name="Fischer M."/>
            <person name="Ahmed Z.M."/>
            <person name="Khan S.Y."/>
            <person name="Janssen A.G."/>
            <person name="Zafar A.U."/>
            <person name="Scholl U."/>
            <person name="Husnain T."/>
            <person name="Belyantseva I.A."/>
            <person name="Friedman P.L."/>
            <person name="Riazuddin S."/>
            <person name="Friedman T.B."/>
            <person name="Fahlke C."/>
        </authorList>
    </citation>
    <scope>FUNCTION</scope>
</reference>
<reference key="10">
    <citation type="journal article" date="2009" name="J. Am. Soc. Nephrol.">
        <title>Disease-causing dysfunctions of barttin in Bartter syndrome type IV.</title>
        <authorList>
            <person name="Janssen A.G."/>
            <person name="Scholl U."/>
            <person name="Domeyer C."/>
            <person name="Nothmann D."/>
            <person name="Leinenweber A."/>
            <person name="Fahlke C."/>
        </authorList>
    </citation>
    <scope>FUNCTION</scope>
    <scope>SUBCELLULAR LOCATION</scope>
    <scope>PTM</scope>
</reference>
<reference key="11">
    <citation type="journal article" date="2004" name="N. Engl. J. Med.">
        <title>Salt wasting and deafness resulting from mutations in two chloride channels.</title>
        <authorList>
            <person name="Schlingmann K.P."/>
            <person name="Konrad M."/>
            <person name="Jeck N."/>
            <person name="Waldegger P."/>
            <person name="Reinalter S.C."/>
            <person name="Holder M."/>
            <person name="Seyberth H.W."/>
            <person name="Waldegger S."/>
        </authorList>
    </citation>
    <scope>INVOLVEMENT IN BARTS4B</scope>
    <scope>FUNCTION</scope>
</reference>
<reference key="12">
    <citation type="journal article" date="2008" name="J. Med. Genet.">
        <title>Molecular analysis of digenic inheritance in Bartter syndrome with sensorineural deafness.</title>
        <authorList>
            <person name="Nozu K."/>
            <person name="Inagaki T."/>
            <person name="Fu X.J."/>
            <person name="Nozu Y."/>
            <person name="Kaito H."/>
            <person name="Kanda K."/>
            <person name="Sekine T."/>
            <person name="Igarashi T."/>
            <person name="Nakanishi K."/>
            <person name="Yoshikawa N."/>
            <person name="Iijima K."/>
            <person name="Matsuo M."/>
        </authorList>
    </citation>
    <scope>INVOLVEMENT IN BARTS4B</scope>
    <scope>FUNCTION</scope>
</reference>
<reference key="13">
    <citation type="journal article" date="1997" name="Nat. Genet.">
        <title>Mutations in the chloride channel gene, CLCNKB, cause Bartter's syndrome type III.</title>
        <authorList>
            <person name="Simon D.B."/>
            <person name="Bindra R.S."/>
            <person name="Mansfield T.A."/>
            <person name="Nelson-Williams C."/>
            <person name="Mendonca E."/>
            <person name="Stone R."/>
            <person name="Schurman S."/>
            <person name="Nayir A."/>
            <person name="Alpay H."/>
            <person name="Bakkaloglu A."/>
            <person name="Rodriguez-Soriano J."/>
            <person name="Morales J.M."/>
            <person name="Sanjad S.A."/>
            <person name="Taylor C.M."/>
            <person name="Pilz D."/>
            <person name="Brem A."/>
            <person name="Trachtman H."/>
            <person name="Griswold W."/>
            <person name="Richard G.A."/>
            <person name="John E."/>
            <person name="Lifton R.P."/>
        </authorList>
    </citation>
    <scope>INVOLVEMENT IN BARTS3</scope>
    <scope>VARIANTS BARTS3 LEU-124; THR-204; ASP-349; HIS-432 AND CYS-438</scope>
</reference>
<reference key="14">
    <citation type="journal article" date="2000" name="J. Am. Soc. Nephrol.">
        <title>Mutations in the chloride channel gene CLCNKB as a cause of classic Bartter syndrome.</title>
        <authorList>
            <person name="Konrad M."/>
            <person name="Vollmer M."/>
            <person name="Lemmink H.H."/>
            <person name="Van Den Heuvel L.P.W.J."/>
            <person name="Jeck N."/>
            <person name="Vargas-Poussou R."/>
            <person name="Lakings A."/>
            <person name="Ruf R."/>
            <person name="Deschenes G."/>
            <person name="Antignac C."/>
            <person name="Guay-Woodford L."/>
            <person name="Knoers N.V.A.M."/>
            <person name="Seyberth H.W."/>
            <person name="Feldmann D."/>
            <person name="Hildebrandt F."/>
        </authorList>
    </citation>
    <scope>INVOLVEMENT IN BARTS3</scope>
    <scope>VARIANTS BARTS3 THR-77; LEU-124; PRO-139; ARG-297; PHE-337; GLN-357; HIS-438; PRO-538; MET-560 AND TYR-573</scope>
</reference>
<evidence type="ECO:0000250" key="1"/>
<evidence type="ECO:0000250" key="2">
    <source>
        <dbReference type="UniProtKB" id="P35523"/>
    </source>
</evidence>
<evidence type="ECO:0000250" key="3">
    <source>
        <dbReference type="UniProtKB" id="P37019"/>
    </source>
</evidence>
<evidence type="ECO:0000250" key="4">
    <source>
        <dbReference type="UniProtKB" id="P51800"/>
    </source>
</evidence>
<evidence type="ECO:0000250" key="5">
    <source>
        <dbReference type="UniProtKB" id="Q9WUB6"/>
    </source>
</evidence>
<evidence type="ECO:0000255" key="6"/>
<evidence type="ECO:0000255" key="7">
    <source>
        <dbReference type="PROSITE-ProRule" id="PRU00703"/>
    </source>
</evidence>
<evidence type="ECO:0000269" key="8">
    <source>
    </source>
</evidence>
<evidence type="ECO:0000269" key="9">
    <source>
    </source>
</evidence>
<evidence type="ECO:0000269" key="10">
    <source>
    </source>
</evidence>
<evidence type="ECO:0000269" key="11">
    <source>
    </source>
</evidence>
<evidence type="ECO:0000269" key="12">
    <source>
    </source>
</evidence>
<evidence type="ECO:0000269" key="13">
    <source>
    </source>
</evidence>
<evidence type="ECO:0000269" key="14">
    <source>
    </source>
</evidence>
<evidence type="ECO:0000269" key="15">
    <source>
    </source>
</evidence>
<evidence type="ECO:0000269" key="16">
    <source>
    </source>
</evidence>
<evidence type="ECO:0000269" key="17">
    <source>
    </source>
</evidence>
<evidence type="ECO:0000269" key="18">
    <source>
    </source>
</evidence>
<evidence type="ECO:0000269" key="19">
    <source>
    </source>
</evidence>
<evidence type="ECO:0000303" key="20">
    <source>
    </source>
</evidence>
<evidence type="ECO:0000303" key="21">
    <source>
    </source>
</evidence>
<evidence type="ECO:0000305" key="22"/>
<evidence type="ECO:0000312" key="23">
    <source>
        <dbReference type="HGNC" id="HGNC:2027"/>
    </source>
</evidence>
<proteinExistence type="evidence at protein level"/>
<gene>
    <name evidence="21 23" type="primary">CLCNKB</name>
</gene>
<sequence>MEEFVGLREGSSGNPVTLQELWGPCPRIRRGIRGGLEWLKQKLFRLGEDWYFLMTLGVLMALVSCAMDLAVESVVRAHQWLYREIGDSHLLRYLSWTVYPVALVSFSSGFSQSITPSSGGSGIPEVKTMLAGVVLEDYLDIKNFGAKVVGLSCTLACGSTLFLGKVGPFVHLSVMMAAYLGRVRTTTIGEPENKSKQNEMLVAAAAVGVATVFAAPFSGVLFSIEVMSSHFSVWDYWRGFFAATCGAFMFRLLAVFNSEQETITSLYKTSFRVDVPFDLPEIFFFVALGGLCGILGSAYLFCQRIFFGFIRNNRFSSKLLATSKPVYSALATLVLASITYPPSAGRFLASRLSMKQHLDSLFDNHSWALMTQNSSPPWPEELDPQHLWWEWYHPRFTIFGTLAFFLVMKFWMLILATTIPMPAGYFMPIFVYGAAIGRLFGETLSFIFPEGIVAGGITNPIMPGGYALAGAAAFSGAVTHTISTALLAFEVTGQIVHALPVLMAVLAANAIAQSCQPSFYDGTVIVKKLPYLPRILGRNIGSHRVRVEHFMNHSITTLAKDMPLEEVVKVVTSTDVAKYPLVESTESQILVGIVRRAQLVQALKAEPPSWAPGHQQCLQDILAAGCPTEPVTLKLSPETSLHEAHNLFELLNLHSLFVTSRGRAVGCVSWVEMKKAISNLTNPPAPK</sequence>
<accession>P51801</accession>
<accession>B3KUY3</accession>
<accession>Q5T5Q7</accession>
<accession>Q5T5Q8</accession>
<name>CLCKB_HUMAN</name>
<organism>
    <name type="scientific">Homo sapiens</name>
    <name type="common">Human</name>
    <dbReference type="NCBI Taxonomy" id="9606"/>
    <lineage>
        <taxon>Eukaryota</taxon>
        <taxon>Metazoa</taxon>
        <taxon>Chordata</taxon>
        <taxon>Craniata</taxon>
        <taxon>Vertebrata</taxon>
        <taxon>Euteleostomi</taxon>
        <taxon>Mammalia</taxon>
        <taxon>Eutheria</taxon>
        <taxon>Euarchontoglires</taxon>
        <taxon>Primates</taxon>
        <taxon>Haplorrhini</taxon>
        <taxon>Catarrhini</taxon>
        <taxon>Hominidae</taxon>
        <taxon>Homo</taxon>
    </lineage>
</organism>
<keyword id="KW-0025">Alternative splicing</keyword>
<keyword id="KW-0910">Bartter syndrome</keyword>
<keyword id="KW-0106">Calcium</keyword>
<keyword id="KW-0129">CBS domain</keyword>
<keyword id="KW-1003">Cell membrane</keyword>
<keyword id="KW-0868">Chloride</keyword>
<keyword id="KW-0869">Chloride channel</keyword>
<keyword id="KW-0209">Deafness</keyword>
<keyword id="KW-0225">Disease variant</keyword>
<keyword id="KW-0325">Glycoprotein</keyword>
<keyword id="KW-0407">Ion channel</keyword>
<keyword id="KW-0406">Ion transport</keyword>
<keyword id="KW-0472">Membrane</keyword>
<keyword id="KW-0479">Metal-binding</keyword>
<keyword id="KW-1267">Proteomics identification</keyword>
<keyword id="KW-1185">Reference proteome</keyword>
<keyword id="KW-0677">Repeat</keyword>
<keyword id="KW-0812">Transmembrane</keyword>
<keyword id="KW-1133">Transmembrane helix</keyword>
<keyword id="KW-0813">Transport</keyword>
<dbReference type="EMBL" id="Z30644">
    <property type="protein sequence ID" value="CAA83121.1"/>
    <property type="molecule type" value="mRNA"/>
</dbReference>
<dbReference type="EMBL" id="S80315">
    <property type="protein sequence ID" value="AAB35898.1"/>
    <property type="molecule type" value="mRNA"/>
</dbReference>
<dbReference type="EMBL" id="AK098217">
    <property type="protein sequence ID" value="BAG53595.1"/>
    <property type="molecule type" value="mRNA"/>
</dbReference>
<dbReference type="EMBL" id="AL355994">
    <property type="status" value="NOT_ANNOTATED_CDS"/>
    <property type="molecule type" value="Genomic_DNA"/>
</dbReference>
<dbReference type="EMBL" id="U93879">
    <property type="protein sequence ID" value="AAB65149.1"/>
    <property type="molecule type" value="Genomic_DNA"/>
</dbReference>
<dbReference type="CCDS" id="CCDS168.1">
    <molecule id="P51801-1"/>
</dbReference>
<dbReference type="CCDS" id="CCDS57974.1">
    <molecule id="P51801-2"/>
</dbReference>
<dbReference type="PIR" id="D57713">
    <property type="entry name" value="D57713"/>
</dbReference>
<dbReference type="RefSeq" id="NP_000076.2">
    <molecule id="P51801-1"/>
    <property type="nucleotide sequence ID" value="NM_000085.5"/>
</dbReference>
<dbReference type="RefSeq" id="NP_001159417.2">
    <molecule id="P51801-2"/>
    <property type="nucleotide sequence ID" value="NM_001165945.2"/>
</dbReference>
<dbReference type="SMR" id="P51801"/>
<dbReference type="BioGRID" id="107602">
    <property type="interactions" value="1"/>
</dbReference>
<dbReference type="FunCoup" id="P51801">
    <property type="interactions" value="31"/>
</dbReference>
<dbReference type="IntAct" id="P51801">
    <property type="interactions" value="2"/>
</dbReference>
<dbReference type="MINT" id="P51801"/>
<dbReference type="STRING" id="9606.ENSP00000364831"/>
<dbReference type="DrugCentral" id="P51801"/>
<dbReference type="GuidetoPHARMACOLOGY" id="701"/>
<dbReference type="TCDB" id="2.A.49.2.15">
    <property type="family name" value="the chloride carrier/channel (clc) family"/>
</dbReference>
<dbReference type="GlyCosmos" id="P51801">
    <property type="glycosylation" value="1 site, No reported glycans"/>
</dbReference>
<dbReference type="GlyGen" id="P51801">
    <property type="glycosylation" value="1 site"/>
</dbReference>
<dbReference type="iPTMnet" id="P51801"/>
<dbReference type="PhosphoSitePlus" id="P51801"/>
<dbReference type="BioMuta" id="CLCNKB"/>
<dbReference type="DMDM" id="288558843"/>
<dbReference type="jPOST" id="P51801"/>
<dbReference type="MassIVE" id="P51801"/>
<dbReference type="PaxDb" id="9606-ENSP00000364831"/>
<dbReference type="PeptideAtlas" id="P51801"/>
<dbReference type="ProteomicsDB" id="56400">
    <molecule id="P51801-1"/>
</dbReference>
<dbReference type="ProteomicsDB" id="64546"/>
<dbReference type="Antibodypedia" id="14485">
    <property type="antibodies" value="134 antibodies from 22 providers"/>
</dbReference>
<dbReference type="DNASU" id="1188"/>
<dbReference type="Ensembl" id="ENST00000375667.7">
    <molecule id="P51801-2"/>
    <property type="protein sequence ID" value="ENSP00000364819.3"/>
    <property type="gene ID" value="ENSG00000184908.20"/>
</dbReference>
<dbReference type="Ensembl" id="ENST00000375679.9">
    <molecule id="P51801-1"/>
    <property type="protein sequence ID" value="ENSP00000364831.5"/>
    <property type="gene ID" value="ENSG00000184908.20"/>
</dbReference>
<dbReference type="Ensembl" id="ENST00000682338.1">
    <molecule id="P51801-1"/>
    <property type="protein sequence ID" value="ENSP00000507062.1"/>
    <property type="gene ID" value="ENSG00000184908.20"/>
</dbReference>
<dbReference type="Ensembl" id="ENST00000682793.1">
    <molecule id="P51801-1"/>
    <property type="protein sequence ID" value="ENSP00000506910.1"/>
    <property type="gene ID" value="ENSG00000184908.20"/>
</dbReference>
<dbReference type="Ensembl" id="ENST00000684324.1">
    <molecule id="P51801-1"/>
    <property type="protein sequence ID" value="ENSP00000507937.1"/>
    <property type="gene ID" value="ENSG00000184908.20"/>
</dbReference>
<dbReference type="Ensembl" id="ENST00000684545.1">
    <molecule id="P51801-1"/>
    <property type="protein sequence ID" value="ENSP00000506733.1"/>
    <property type="gene ID" value="ENSG00000184908.20"/>
</dbReference>
<dbReference type="GeneID" id="1188"/>
<dbReference type="KEGG" id="hsa:1188"/>
<dbReference type="MANE-Select" id="ENST00000375679.9">
    <property type="protein sequence ID" value="ENSP00000364831.5"/>
    <property type="RefSeq nucleotide sequence ID" value="NM_000085.5"/>
    <property type="RefSeq protein sequence ID" value="NP_000076.2"/>
</dbReference>
<dbReference type="UCSC" id="uc001axx.6">
    <molecule id="P51801-1"/>
    <property type="organism name" value="human"/>
</dbReference>
<dbReference type="AGR" id="HGNC:2027"/>
<dbReference type="CTD" id="1188"/>
<dbReference type="DisGeNET" id="1188"/>
<dbReference type="GeneCards" id="CLCNKB"/>
<dbReference type="HGNC" id="HGNC:2027">
    <property type="gene designation" value="CLCNKB"/>
</dbReference>
<dbReference type="HPA" id="ENSG00000184908">
    <property type="expression patterns" value="Tissue enriched (kidney)"/>
</dbReference>
<dbReference type="MalaCards" id="CLCNKB"/>
<dbReference type="MIM" id="602023">
    <property type="type" value="gene"/>
</dbReference>
<dbReference type="MIM" id="607364">
    <property type="type" value="phenotype"/>
</dbReference>
<dbReference type="MIM" id="613090">
    <property type="type" value="phenotype"/>
</dbReference>
<dbReference type="neXtProt" id="NX_P51801"/>
<dbReference type="OpenTargets" id="ENSG00000184908"/>
<dbReference type="Orphanet" id="93605">
    <property type="disease" value="Bartter syndrome type 3"/>
</dbReference>
<dbReference type="Orphanet" id="89938">
    <property type="disease" value="Bartter syndrome type 4"/>
</dbReference>
<dbReference type="Orphanet" id="358">
    <property type="disease" value="Gitelman syndrome"/>
</dbReference>
<dbReference type="PharmGKB" id="PA26554"/>
<dbReference type="VEuPathDB" id="HostDB:ENSG00000184908"/>
<dbReference type="eggNOG" id="KOG0476">
    <property type="taxonomic scope" value="Eukaryota"/>
</dbReference>
<dbReference type="GeneTree" id="ENSGT00940000158748"/>
<dbReference type="HOGENOM" id="CLU_006904_4_0_1"/>
<dbReference type="InParanoid" id="P51801"/>
<dbReference type="OMA" id="EVCCIHP"/>
<dbReference type="OrthoDB" id="4564at2759"/>
<dbReference type="PAN-GO" id="P51801">
    <property type="GO annotations" value="3 GO annotations based on evolutionary models"/>
</dbReference>
<dbReference type="PhylomeDB" id="P51801"/>
<dbReference type="TreeFam" id="TF300522"/>
<dbReference type="PathwayCommons" id="P51801"/>
<dbReference type="Reactome" id="R-HSA-2672351">
    <property type="pathway name" value="Stimuli-sensing channels"/>
</dbReference>
<dbReference type="SignaLink" id="P51801"/>
<dbReference type="BioGRID-ORCS" id="1188">
    <property type="hits" value="14 hits in 1148 CRISPR screens"/>
</dbReference>
<dbReference type="ChiTaRS" id="CLCNKB">
    <property type="organism name" value="human"/>
</dbReference>
<dbReference type="GeneWiki" id="CLCNKB"/>
<dbReference type="GenomeRNAi" id="1188"/>
<dbReference type="Pharos" id="P51801">
    <property type="development level" value="Tchem"/>
</dbReference>
<dbReference type="PRO" id="PR:P51801"/>
<dbReference type="Proteomes" id="UP000005640">
    <property type="component" value="Chromosome 1"/>
</dbReference>
<dbReference type="RNAct" id="P51801">
    <property type="molecule type" value="protein"/>
</dbReference>
<dbReference type="Bgee" id="ENSG00000184908">
    <property type="expression patterns" value="Expressed in renal medulla and 122 other cell types or tissues"/>
</dbReference>
<dbReference type="ExpressionAtlas" id="P51801">
    <property type="expression patterns" value="baseline and differential"/>
</dbReference>
<dbReference type="GO" id="GO:0016323">
    <property type="term" value="C:basolateral plasma membrane"/>
    <property type="evidence" value="ECO:0000314"/>
    <property type="project" value="UniProtKB"/>
</dbReference>
<dbReference type="GO" id="GO:0034707">
    <property type="term" value="C:chloride channel complex"/>
    <property type="evidence" value="ECO:0007669"/>
    <property type="project" value="UniProtKB-KW"/>
</dbReference>
<dbReference type="GO" id="GO:0005886">
    <property type="term" value="C:plasma membrane"/>
    <property type="evidence" value="ECO:0000318"/>
    <property type="project" value="GO_Central"/>
</dbReference>
<dbReference type="GO" id="GO:0005254">
    <property type="term" value="F:chloride channel activity"/>
    <property type="evidence" value="ECO:0000314"/>
    <property type="project" value="UniProtKB"/>
</dbReference>
<dbReference type="GO" id="GO:0046872">
    <property type="term" value="F:metal ion binding"/>
    <property type="evidence" value="ECO:0007669"/>
    <property type="project" value="UniProtKB-KW"/>
</dbReference>
<dbReference type="GO" id="GO:0005247">
    <property type="term" value="F:voltage-gated chloride channel activity"/>
    <property type="evidence" value="ECO:0000318"/>
    <property type="project" value="GO_Central"/>
</dbReference>
<dbReference type="GO" id="GO:0006821">
    <property type="term" value="P:chloride transport"/>
    <property type="evidence" value="ECO:0000318"/>
    <property type="project" value="GO_Central"/>
</dbReference>
<dbReference type="GO" id="GO:0070293">
    <property type="term" value="P:renal absorption"/>
    <property type="evidence" value="ECO:0000304"/>
    <property type="project" value="UniProtKB"/>
</dbReference>
<dbReference type="GO" id="GO:0070294">
    <property type="term" value="P:renal sodium ion absorption"/>
    <property type="evidence" value="ECO:0000315"/>
    <property type="project" value="UniProtKB"/>
</dbReference>
<dbReference type="GO" id="GO:0030321">
    <property type="term" value="P:transepithelial chloride transport"/>
    <property type="evidence" value="ECO:0000304"/>
    <property type="project" value="UniProtKB"/>
</dbReference>
<dbReference type="CDD" id="cd04591">
    <property type="entry name" value="CBS_pair_voltage-gated_CLC_euk_bac"/>
    <property type="match status" value="1"/>
</dbReference>
<dbReference type="CDD" id="cd03683">
    <property type="entry name" value="ClC_1_like"/>
    <property type="match status" value="1"/>
</dbReference>
<dbReference type="FunFam" id="1.10.3080.10:FF:000012">
    <property type="entry name" value="Chloride channel K"/>
    <property type="match status" value="1"/>
</dbReference>
<dbReference type="FunFam" id="3.10.580.10:FF:000028">
    <property type="entry name" value="Chloride channel protein"/>
    <property type="match status" value="1"/>
</dbReference>
<dbReference type="Gene3D" id="3.10.580.10">
    <property type="entry name" value="CBS-domain"/>
    <property type="match status" value="1"/>
</dbReference>
<dbReference type="Gene3D" id="1.10.3080.10">
    <property type="entry name" value="Clc chloride channel"/>
    <property type="match status" value="1"/>
</dbReference>
<dbReference type="InterPro" id="IPR000644">
    <property type="entry name" value="CBS_dom"/>
</dbReference>
<dbReference type="InterPro" id="IPR046342">
    <property type="entry name" value="CBS_dom_sf"/>
</dbReference>
<dbReference type="InterPro" id="IPR014743">
    <property type="entry name" value="Cl-channel_core"/>
</dbReference>
<dbReference type="InterPro" id="IPR002250">
    <property type="entry name" value="Cl_channel-K"/>
</dbReference>
<dbReference type="InterPro" id="IPR050970">
    <property type="entry name" value="Cl_channel_volt-gated"/>
</dbReference>
<dbReference type="InterPro" id="IPR001807">
    <property type="entry name" value="ClC"/>
</dbReference>
<dbReference type="PANTHER" id="PTHR45720">
    <property type="entry name" value="CHLORIDE CHANNEL PROTEIN 2"/>
    <property type="match status" value="1"/>
</dbReference>
<dbReference type="PANTHER" id="PTHR45720:SF3">
    <property type="entry name" value="CHLORIDE CHANNEL PROTEIN CLC-KB"/>
    <property type="match status" value="1"/>
</dbReference>
<dbReference type="Pfam" id="PF00571">
    <property type="entry name" value="CBS"/>
    <property type="match status" value="1"/>
</dbReference>
<dbReference type="Pfam" id="PF00654">
    <property type="entry name" value="Voltage_CLC"/>
    <property type="match status" value="1"/>
</dbReference>
<dbReference type="PRINTS" id="PR00762">
    <property type="entry name" value="CLCHANNEL"/>
</dbReference>
<dbReference type="PRINTS" id="PR01119">
    <property type="entry name" value="CLCHANNELKDY"/>
</dbReference>
<dbReference type="SMART" id="SM00116">
    <property type="entry name" value="CBS"/>
    <property type="match status" value="2"/>
</dbReference>
<dbReference type="SUPFAM" id="SSF54631">
    <property type="entry name" value="CBS-domain pair"/>
    <property type="match status" value="1"/>
</dbReference>
<dbReference type="SUPFAM" id="SSF81340">
    <property type="entry name" value="Clc chloride channel"/>
    <property type="match status" value="1"/>
</dbReference>
<dbReference type="PROSITE" id="PS51371">
    <property type="entry name" value="CBS"/>
    <property type="match status" value="2"/>
</dbReference>
<protein>
    <recommendedName>
        <fullName>Chloride channel protein ClC-Kb</fullName>
        <shortName>Chloride channel Kb</shortName>
    </recommendedName>
    <alternativeName>
        <fullName>ClC-K2</fullName>
    </alternativeName>
</protein>
<feature type="chain" id="PRO_0000094459" description="Chloride channel protein ClC-Kb">
    <location>
        <begin position="1"/>
        <end position="687"/>
    </location>
</feature>
<feature type="topological domain" description="Cytoplasmic" evidence="2">
    <location>
        <begin position="1"/>
        <end position="50"/>
    </location>
</feature>
<feature type="transmembrane region" description="Helical" evidence="2">
    <location>
        <begin position="51"/>
        <end position="82"/>
    </location>
</feature>
<feature type="transmembrane region" description="Helical" evidence="2">
    <location>
        <begin position="91"/>
        <end position="111"/>
    </location>
</feature>
<feature type="intramembrane region" description="Helical" evidence="2">
    <location>
        <begin position="116"/>
        <end position="127"/>
    </location>
</feature>
<feature type="transmembrane region" description="Helical" evidence="2">
    <location>
        <begin position="141"/>
        <end position="160"/>
    </location>
</feature>
<feature type="transmembrane region" description="Helical" evidence="2">
    <location>
        <begin position="161"/>
        <end position="180"/>
    </location>
</feature>
<feature type="intramembrane region" description="Helical" evidence="2">
    <location>
        <begin position="203"/>
        <end position="224"/>
    </location>
</feature>
<feature type="transmembrane region" description="Helical" evidence="2">
    <location>
        <begin position="236"/>
        <end position="255"/>
    </location>
</feature>
<feature type="transmembrane region" description="Helical" evidence="2">
    <location>
        <begin position="282"/>
        <end position="310"/>
    </location>
</feature>
<feature type="transmembrane region" description="Helical" evidence="2">
    <location>
        <begin position="325"/>
        <end position="342"/>
    </location>
</feature>
<feature type="intramembrane region" description="Helical" evidence="2">
    <location>
        <begin position="349"/>
        <end position="360"/>
    </location>
</feature>
<feature type="transmembrane region" description="Helical" evidence="2">
    <location>
        <begin position="400"/>
        <end position="420"/>
    </location>
</feature>
<feature type="transmembrane region" description="Helical" evidence="2">
    <location>
        <begin position="421"/>
        <end position="440"/>
    </location>
</feature>
<feature type="intramembrane region" description="Helical" evidence="2">
    <location>
        <begin position="464"/>
        <end position="496"/>
    </location>
</feature>
<feature type="transmembrane region" description="Helical" evidence="2">
    <location>
        <begin position="500"/>
        <end position="520"/>
    </location>
</feature>
<feature type="topological domain" description="Cytoplasmic" evidence="2">
    <location>
        <begin position="521"/>
        <end position="687"/>
    </location>
</feature>
<feature type="domain" description="CBS 1" evidence="7">
    <location>
        <begin position="551"/>
        <end position="609"/>
    </location>
</feature>
<feature type="domain" description="CBS 2" evidence="7">
    <location>
        <begin position="626"/>
        <end position="684"/>
    </location>
</feature>
<feature type="binding site" evidence="3">
    <location>
        <position position="121"/>
    </location>
    <ligand>
        <name>chloride</name>
        <dbReference type="ChEBI" id="CHEBI:17996"/>
    </ligand>
</feature>
<feature type="binding site" evidence="1">
    <location>
        <position position="259"/>
    </location>
    <ligand>
        <name>Ca(2+)</name>
        <dbReference type="ChEBI" id="CHEBI:29108"/>
    </ligand>
</feature>
<feature type="binding site" evidence="1">
    <location>
        <position position="261"/>
    </location>
    <ligand>
        <name>Ca(2+)</name>
        <dbReference type="ChEBI" id="CHEBI:29108"/>
    </ligand>
</feature>
<feature type="binding site" evidence="1">
    <location>
        <position position="278"/>
    </location>
    <ligand>
        <name>Ca(2+)</name>
        <dbReference type="ChEBI" id="CHEBI:29108"/>
    </ligand>
</feature>
<feature type="binding site" evidence="1">
    <location>
        <position position="281"/>
    </location>
    <ligand>
        <name>Ca(2+)</name>
        <dbReference type="ChEBI" id="CHEBI:29108"/>
    </ligand>
</feature>
<feature type="binding site" evidence="3">
    <location>
        <position position="426"/>
    </location>
    <ligand>
        <name>chloride</name>
        <dbReference type="ChEBI" id="CHEBI:17996"/>
    </ligand>
</feature>
<feature type="glycosylation site" description="N-linked (GlcNAc...) asparagine" evidence="6">
    <location>
        <position position="193"/>
    </location>
</feature>
<feature type="splice variant" id="VSP_045965" description="In isoform 2." evidence="20">
    <original>MEEFVGLREGSSGNPVTLQELWGPCPRIRRGIRGGLEWLKQKLFRLGED</original>
    <variation>MPCPPLLSVPVRAAGEQDRWVREEVTWGGGPTVTGGWGWRAHLRSVSPP</variation>
    <location>
        <begin position="1"/>
        <end position="49"/>
    </location>
</feature>
<feature type="splice variant" id="VSP_045966" description="In isoform 2." evidence="20">
    <location>
        <begin position="50"/>
        <end position="218"/>
    </location>
</feature>
<feature type="splice variant" id="VSP_045967" description="In isoform 2." evidence="20">
    <location>
        <position position="616"/>
    </location>
</feature>
<feature type="sequence variant" id="VAR_033770" description="In dbSNP:rs34851419.">
    <original>F</original>
    <variation>L</variation>
    <location>
        <position position="4"/>
    </location>
</feature>
<feature type="sequence variant" id="VAR_046797" description="In dbSNP:rs2015352." evidence="17 18">
    <original>R</original>
    <variation>L</variation>
    <location>
        <position position="27"/>
    </location>
</feature>
<feature type="sequence variant" id="VAR_089436" description="In BARTS3; dbSNP:rs2023079694." evidence="8">
    <original>A</original>
    <variation>T</variation>
    <location>
        <position position="77"/>
    </location>
</feature>
<feature type="sequence variant" id="VAR_014466" description="In dbSNP:rs5256.">
    <original>S</original>
    <variation>R</variation>
    <location>
        <position position="88"/>
    </location>
</feature>
<feature type="sequence variant" id="VAR_033771" description="In dbSNP:rs35530360.">
    <original>V</original>
    <variation>I</variation>
    <location>
        <position position="104"/>
    </location>
</feature>
<feature type="sequence variant" id="VAR_001624" description="In BARTS3; decreases channel conductance; dbSNP:rs121909131." evidence="8 9 19">
    <original>P</original>
    <variation>L</variation>
    <location>
        <position position="124"/>
    </location>
</feature>
<feature type="sequence variant" id="VAR_089437" description="In BARTS3." evidence="8">
    <original>L</original>
    <variation>P</variation>
    <location>
        <position position="139"/>
    </location>
</feature>
<feature type="sequence variant" id="VAR_014467" description="In dbSNP:rs5259.">
    <original>N</original>
    <variation>H</variation>
    <location>
        <position position="143"/>
    </location>
</feature>
<feature type="sequence variant" id="VAR_001625" description="In BARTS3; decreases channel conductance; dbSNP:rs121909132." evidence="9 19">
    <original>A</original>
    <variation>T</variation>
    <location>
        <position position="204"/>
    </location>
</feature>
<feature type="sequence variant" id="VAR_033772" description="In dbSNP:rs1889789." evidence="17 18">
    <original>A</original>
    <variation>G</variation>
    <location>
        <position position="214"/>
    </location>
</feature>
<feature type="sequence variant" id="VAR_069104" description="In dbSNP:rs7367494." evidence="11 17 18">
    <original>A</original>
    <variation>V</variation>
    <location>
        <position position="287"/>
    </location>
</feature>
<feature type="sequence variant" id="VAR_089438" description="In BARTS3; dbSNP:rs565165729." evidence="8">
    <original>S</original>
    <variation>R</variation>
    <location>
        <position position="297"/>
    </location>
</feature>
<feature type="sequence variant" id="VAR_014468" description="In dbSNP:rs5251.">
    <original>V</original>
    <variation>L</variation>
    <location>
        <position position="334"/>
    </location>
</feature>
<feature type="sequence variant" id="VAR_089439" description="In BARTS3." evidence="8">
    <original>S</original>
    <variation>F</variation>
    <location>
        <position position="337"/>
    </location>
</feature>
<feature type="sequence variant" id="VAR_001626" description="In BARTS3; loss of channel conductance; dbSNP:rs121909134." evidence="9 19">
    <original>A</original>
    <variation>D</variation>
    <location>
        <position position="349"/>
    </location>
</feature>
<feature type="sequence variant" id="VAR_089440" description="In BARTS3; dbSNP:rs201245211." evidence="8">
    <original>H</original>
    <variation>Q</variation>
    <location>
        <position position="357"/>
    </location>
</feature>
<feature type="sequence variant" id="VAR_046799" description="In dbSNP:rs34255952.">
    <original>R</original>
    <variation>W</variation>
    <location>
        <position position="395"/>
    </location>
</feature>
<feature type="sequence variant" id="VAR_033773" description="In dbSNP:rs6650119.">
    <original>I</original>
    <variation>V</variation>
    <location>
        <position position="419"/>
    </location>
</feature>
<feature type="sequence variant" id="VAR_001627" description="In BARTS3; dbSNP:rs121909135." evidence="19">
    <original>Y</original>
    <variation>H</variation>
    <location>
        <position position="432"/>
    </location>
</feature>
<feature type="sequence variant" id="VAR_001628" description="In BARTS3; loss of channel conductance; dbSNP:rs121909133." evidence="9 19">
    <original>R</original>
    <variation>C</variation>
    <location>
        <position position="438"/>
    </location>
</feature>
<feature type="sequence variant" id="VAR_089441" description="In BARTS3; dbSNP:rs201540273." evidence="8">
    <original>R</original>
    <variation>H</variation>
    <location>
        <position position="438"/>
    </location>
</feature>
<feature type="sequence variant" id="VAR_046800" description="In dbSNP:rs12140311.">
    <original>T</original>
    <variation>S</variation>
    <location>
        <position position="481"/>
    </location>
</feature>
<feature type="sequence variant" id="VAR_089442" description="In BARTS3; decreases channel conductance." evidence="8 9">
    <original>R</original>
    <variation>P</variation>
    <location>
        <position position="538"/>
    </location>
</feature>
<feature type="sequence variant" id="VAR_089443" description="In BARTS3; decreases channel conductance." evidence="8 9">
    <original>K</original>
    <variation>M</variation>
    <location>
        <position position="560"/>
    </location>
</feature>
<feature type="sequence variant" id="VAR_014469" description="In dbSNP:rs5253." evidence="17 18">
    <original>M</original>
    <variation>T</variation>
    <location>
        <position position="562"/>
    </location>
</feature>
<feature type="sequence variant" id="VAR_089444" description="In BARTS3." evidence="8">
    <original>S</original>
    <variation>Y</variation>
    <location>
        <position position="573"/>
    </location>
</feature>
<feature type="sequence variant" id="VAR_024409" description="In dbSNP:rs2275166." evidence="17 18">
    <original>K</original>
    <variation>E</variation>
    <location>
        <position position="578"/>
    </location>
</feature>
<feature type="sequence variant" id="VAR_046801" description="In dbSNP:rs5255.">
    <original>S</original>
    <variation>L</variation>
    <location>
        <position position="660"/>
    </location>
</feature>
<feature type="sequence conflict" description="In Ref. 3; BAG53595." evidence="22" ref="3">
    <original>S</original>
    <variation>P</variation>
    <location>
        <position position="609"/>
    </location>
</feature>
<comment type="function">
    <text evidence="5 9 10 12 13 14 15 16">Anion-selective channel permeable to small monovalent anions with ion selectivity for chloride &gt; bromide &gt; nitrate &gt; iodide (PubMed:11734858, PubMed:12111250). Forms a homodimeric channel where each subunit has its own ion conduction pathway. May conduct double-barreled currents controlled by two types of gates, two fast gates that control each subunit independently and a slow common gate that opens and shuts off both subunits simultaneously (PubMed:11734858, PubMed:12111250, PubMed:16849430, PubMed:18776122, PubMed:19646679). Assembles with the regulatory subunit BSND/Barttin for sorting at the basolateral plasma membrane domain and functional switch to the ion conducting state. CLCNKB:BSND channels display mostly a linear current-voltage relationship controlled by common gate (PubMed:11734858, PubMed:12111250, PubMed:16849430, PubMed:18776122, PubMed:19646679). Mediates chloride conductance along nephron segments, namely the thick ascending limb of Henle's loop, convoluted tubule and the collecting duct, contributing to the maintenance of systemic acid-base and electrolyte homeostasis (By similarity). Conducts chloride currents in the stria vascularis of the inner ear to establish the endocochlear potential necessary for normal hearing (PubMed:15044642, PubMed:18310267, PubMed:19646679).</text>
</comment>
<comment type="catalytic activity">
    <reaction evidence="9 10">
        <text>chloride(in) = chloride(out)</text>
        <dbReference type="Rhea" id="RHEA:29823"/>
        <dbReference type="ChEBI" id="CHEBI:17996"/>
    </reaction>
</comment>
<comment type="catalytic activity">
    <reaction evidence="9 10">
        <text>iodide(out) = iodide(in)</text>
        <dbReference type="Rhea" id="RHEA:66324"/>
        <dbReference type="ChEBI" id="CHEBI:16382"/>
    </reaction>
</comment>
<comment type="catalytic activity">
    <reaction evidence="9 10">
        <text>nitrate(in) = nitrate(out)</text>
        <dbReference type="Rhea" id="RHEA:34923"/>
        <dbReference type="ChEBI" id="CHEBI:17632"/>
    </reaction>
</comment>
<comment type="catalytic activity">
    <reaction evidence="9 10">
        <text>bromide(in) = bromide(out)</text>
        <dbReference type="Rhea" id="RHEA:75383"/>
        <dbReference type="ChEBI" id="CHEBI:15858"/>
    </reaction>
</comment>
<comment type="activity regulation">
    <text evidence="9">Activated by extracellular Ca(2+) and inhibited by extracellular acidic pH.</text>
</comment>
<comment type="subunit">
    <text evidence="4 10">Homodimer (By similarity). Interacts with BSND (PubMed:12111250).</text>
</comment>
<comment type="subcellular location">
    <subcellularLocation>
        <location evidence="15">Basolateral cell membrane</location>
        <topology evidence="6">Multi-pass membrane protein</topology>
    </subcellularLocation>
</comment>
<comment type="alternative products">
    <event type="alternative splicing"/>
    <isoform>
        <id>P51801-1</id>
        <name>1</name>
        <sequence type="displayed"/>
    </isoform>
    <isoform>
        <id>P51801-2</id>
        <name>2</name>
        <sequence type="described" ref="VSP_045965 VSP_045966 VSP_045967"/>
    </isoform>
</comment>
<comment type="PTM">
    <text evidence="15">N-glycosylated.</text>
</comment>
<comment type="disease" evidence="8 9 19">
    <disease id="DI-00175">
        <name>Bartter syndrome 3</name>
        <acronym>BARTS3</acronym>
        <description>A form of Bartter syndrome, an autosomal recessive disorder characterized by impaired salt reabsorption in the thick ascending loop of Henle with pronounced salt wasting, hypokalemic metabolic alkalosis, and varying degrees of hypercalciuria.</description>
        <dbReference type="MIM" id="607364"/>
    </disease>
    <text>The disease is caused by variants affecting the gene represented in this entry.</text>
</comment>
<comment type="disease" evidence="12 14">
    <disease id="DI-02554">
        <name>Bartter syndrome 4B, neonatal, with sensorineural deafness</name>
        <acronym>BARTS4B</acronym>
        <description>A digenic form of Bartter syndrome, an autosomal recessive disorder characterized by impaired salt reabsorption in the thick ascending loop of Henle with pronounced salt wasting, hypokalemic metabolic alkalosis, and varying degrees of hypercalciuria. BARTS4B is associated with sensorineural deafness.</description>
        <dbReference type="MIM" id="613090"/>
    </disease>
    <text evidence="14">The disease is caused by variants affecting distinct genetic loci, including the gene represented in this entry. Loss-of-function of both CLCNKA and CLCNKB results in the disease phenotype (PubMed:18310267).</text>
</comment>
<comment type="miscellaneous">
    <text>Compared with CLCNKA/BSND, CLCNKB/BSND is more sensitive to pH and less responsive to Ca(2+).</text>
</comment>
<comment type="similarity">
    <text evidence="22">Belongs to the chloride channel (TC 2.A.49) family. CLCNKB subfamily.</text>
</comment>